<name>S53A1_CRIGR</name>
<protein>
    <recommendedName>
        <fullName evidence="1">Solute carrier family 53 member 1</fullName>
    </recommendedName>
    <alternativeName>
        <fullName evidence="1">Phosphate exporter SLC53A1</fullName>
    </alternativeName>
    <alternativeName>
        <fullName>Xenotropic and polytropic retrovirus receptor 1 homolog</fullName>
    </alternativeName>
</protein>
<gene>
    <name type="primary">XPR1</name>
    <name evidence="1" type="synonym">SLC53A1</name>
</gene>
<proteinExistence type="evidence at transcript level"/>
<comment type="function">
    <text evidence="1">Inorganic ion transporter that mediates phosphate ion export across plasma membrane (By similarity). Plays a major role in phosphate homeostasis, preventing intracellular phosphate accumulation and possible calcium phosphate precipitation, ultimately preserving calcium signaling (By similarity). Binds inositol hexakisphosphate (Ins6P) and similar inositol polyphosphates, such as 5-diphospho-inositol pentakisphosphate (5-InsP7), which are important intracellular signaling molecules involved in regulation of phosphate flux (By similarity).</text>
</comment>
<comment type="catalytic activity">
    <reaction evidence="1">
        <text>phosphate(in) = phosphate(out)</text>
        <dbReference type="Rhea" id="RHEA:32823"/>
        <dbReference type="ChEBI" id="CHEBI:43474"/>
    </reaction>
    <physiologicalReaction direction="left-to-right" evidence="1">
        <dbReference type="Rhea" id="RHEA:32824"/>
    </physiologicalReaction>
</comment>
<comment type="subunit">
    <text evidence="1">Homodimer.</text>
</comment>
<comment type="subcellular location">
    <subcellularLocation>
        <location evidence="1">Cell membrane</location>
        <topology evidence="1">Multi-pass membrane protein</topology>
    </subcellularLocation>
</comment>
<comment type="domain">
    <text evidence="1">The SPX domain plays a role in the regulation of phosphate flux (By similarity). Inositol hexakisphosphate (Ins6P) is bound between two SPX domains of the homodimer (By similarity). The SPX domain has high affinity for inositol polyphosphates and its affinity for inorganic phosphate is two to three orders of magnitude lower (By similarity).</text>
</comment>
<comment type="similarity">
    <text evidence="4">Belongs to the SYG1 (TC 2.A.94) family.</text>
</comment>
<organism>
    <name type="scientific">Cricetulus griseus</name>
    <name type="common">Chinese hamster</name>
    <name type="synonym">Cricetulus barabensis griseus</name>
    <dbReference type="NCBI Taxonomy" id="10029"/>
    <lineage>
        <taxon>Eukaryota</taxon>
        <taxon>Metazoa</taxon>
        <taxon>Chordata</taxon>
        <taxon>Craniata</taxon>
        <taxon>Vertebrata</taxon>
        <taxon>Euteleostomi</taxon>
        <taxon>Mammalia</taxon>
        <taxon>Eutheria</taxon>
        <taxon>Euarchontoglires</taxon>
        <taxon>Glires</taxon>
        <taxon>Rodentia</taxon>
        <taxon>Myomorpha</taxon>
        <taxon>Muroidea</taxon>
        <taxon>Cricetidae</taxon>
        <taxon>Cricetinae</taxon>
        <taxon>Cricetulus</taxon>
    </lineage>
</organism>
<sequence>MKFAEHLSAHITPEWRKQYIQYEAFKDMLYSAQDQAPSVEVTDEDTVKRYFAKFEEKFFQTCEKELAKINTFYSEKLAEAQRRFATLQNELQSSLDAQRESIGVTTLRQRRKPVFHLSHEERVQHRNIKDLKLAFSEFYLSLILLQNYQNLNFTGFRKILKKHDKILETSRGADWRVGHVEVAPFYTCKKINQLISETEAVVTNELEDGDRQKAMKRLRVPPLGAAQPAPAWTTFRVGLFCGIFIVLNITLVLAAVFKLETDRTVWPLIRIYRGGFLLIEFLFLLGINTYGWRQAGVNHVLIFELNPRNNLSHQHLFEIAGFLGILWCLSLLACFFAPISVVPIYVYPLALYGFMVFFLINPTKTFYYKSRFWLLKLLFRVFTAPFHKVGFADFWLADQLNSLSVILMDLEYMICFYSFELKWDENKSLLPNDLQEPEFCHRYTYGVRAIVQCIPAWLRFIQCLRRYRDTKRAFPHLVNAGKYSTTFFTVTFAALYSTHKERQHSDTMVFLYLWVVFCAISSCYTLIWDLKMDWGLFDKNAGENTFLREEIVYPQKAYYYCAIIEDVILRFAWTIQISITATAFQPHVGDIIATVFAPLEVFRRFVWNFFRLENEHLNNCGEFRAVRDISVAPLNADDQTLLEQMMDQEDGVRNRQKNRSWKYNQSISLRRPRLASQSKARDTKVLIEDTDDEANT</sequence>
<keyword id="KW-1003">Cell membrane</keyword>
<keyword id="KW-0472">Membrane</keyword>
<keyword id="KW-0597">Phosphoprotein</keyword>
<keyword id="KW-0812">Transmembrane</keyword>
<keyword id="KW-1133">Transmembrane helix</keyword>
<dbReference type="EMBL" id="AF131099">
    <property type="protein sequence ID" value="AAF03485.1"/>
    <property type="molecule type" value="mRNA"/>
</dbReference>
<dbReference type="EMBL" id="AF198106">
    <property type="protein sequence ID" value="AAF13258.1"/>
    <property type="molecule type" value="mRNA"/>
</dbReference>
<dbReference type="RefSeq" id="NP_001231014.1">
    <property type="nucleotide sequence ID" value="NM_001244085.1"/>
</dbReference>
<dbReference type="SMR" id="Q9QZ70"/>
<dbReference type="PaxDb" id="10029-NP_001231014.1"/>
<dbReference type="Ensembl" id="ENSCGRT00001027531.1">
    <property type="protein sequence ID" value="ENSCGRP00001023285.1"/>
    <property type="gene ID" value="ENSCGRG00001021543.1"/>
</dbReference>
<dbReference type="GeneID" id="100689082"/>
<dbReference type="KEGG" id="cge:100689082"/>
<dbReference type="CTD" id="9213"/>
<dbReference type="eggNOG" id="KOG1162">
    <property type="taxonomic scope" value="Eukaryota"/>
</dbReference>
<dbReference type="GeneTree" id="ENSGT00500000044895"/>
<dbReference type="OrthoDB" id="9970435at2759"/>
<dbReference type="Proteomes" id="UP000694386">
    <property type="component" value="Unplaced"/>
</dbReference>
<dbReference type="Proteomes" id="UP001108280">
    <property type="component" value="Chromosome 5"/>
</dbReference>
<dbReference type="GO" id="GO:0005794">
    <property type="term" value="C:Golgi apparatus"/>
    <property type="evidence" value="ECO:0007669"/>
    <property type="project" value="TreeGrafter"/>
</dbReference>
<dbReference type="GO" id="GO:0005886">
    <property type="term" value="C:plasma membrane"/>
    <property type="evidence" value="ECO:0000250"/>
    <property type="project" value="UniProtKB"/>
</dbReference>
<dbReference type="GO" id="GO:0015562">
    <property type="term" value="F:efflux transmembrane transporter activity"/>
    <property type="evidence" value="ECO:0000250"/>
    <property type="project" value="UniProtKB"/>
</dbReference>
<dbReference type="GO" id="GO:0000822">
    <property type="term" value="F:inositol hexakisphosphate binding"/>
    <property type="evidence" value="ECO:0000250"/>
    <property type="project" value="UniProtKB"/>
</dbReference>
<dbReference type="GO" id="GO:0005315">
    <property type="term" value="F:phosphate transmembrane transporter activity"/>
    <property type="evidence" value="ECO:0000250"/>
    <property type="project" value="UniProtKB"/>
</dbReference>
<dbReference type="GO" id="GO:0001618">
    <property type="term" value="F:virus receptor activity"/>
    <property type="evidence" value="ECO:0007669"/>
    <property type="project" value="Ensembl"/>
</dbReference>
<dbReference type="GO" id="GO:0016036">
    <property type="term" value="P:cellular response to phosphate starvation"/>
    <property type="evidence" value="ECO:0007669"/>
    <property type="project" value="TreeGrafter"/>
</dbReference>
<dbReference type="GO" id="GO:0030643">
    <property type="term" value="P:intracellular phosphate ion homeostasis"/>
    <property type="evidence" value="ECO:0000250"/>
    <property type="project" value="UniProtKB"/>
</dbReference>
<dbReference type="GO" id="GO:0035435">
    <property type="term" value="P:phosphate ion transmembrane transport"/>
    <property type="evidence" value="ECO:0000250"/>
    <property type="project" value="UniProtKB"/>
</dbReference>
<dbReference type="GO" id="GO:0009615">
    <property type="term" value="P:response to virus"/>
    <property type="evidence" value="ECO:0007669"/>
    <property type="project" value="Ensembl"/>
</dbReference>
<dbReference type="CDD" id="cd14477">
    <property type="entry name" value="SPX_XPR1_like"/>
    <property type="match status" value="1"/>
</dbReference>
<dbReference type="InterPro" id="IPR004342">
    <property type="entry name" value="EXS_C"/>
</dbReference>
<dbReference type="InterPro" id="IPR004331">
    <property type="entry name" value="SPX_dom"/>
</dbReference>
<dbReference type="PANTHER" id="PTHR10783:SF103">
    <property type="entry name" value="SOLUTE CARRIER FAMILY 53 MEMBER 1"/>
    <property type="match status" value="1"/>
</dbReference>
<dbReference type="PANTHER" id="PTHR10783">
    <property type="entry name" value="XENOTROPIC AND POLYTROPIC RETROVIRUS RECEPTOR 1-RELATED"/>
    <property type="match status" value="1"/>
</dbReference>
<dbReference type="Pfam" id="PF03124">
    <property type="entry name" value="EXS"/>
    <property type="match status" value="1"/>
</dbReference>
<dbReference type="Pfam" id="PF03105">
    <property type="entry name" value="SPX"/>
    <property type="match status" value="3"/>
</dbReference>
<dbReference type="PROSITE" id="PS51380">
    <property type="entry name" value="EXS"/>
    <property type="match status" value="1"/>
</dbReference>
<dbReference type="PROSITE" id="PS51382">
    <property type="entry name" value="SPX"/>
    <property type="match status" value="1"/>
</dbReference>
<reference key="1">
    <citation type="journal article" date="1999" name="J. Virol.">
        <title>Polymorphisms of the cell surface receptor control mouse susceptibilities to xenotropic and polytropic leukemia viruses.</title>
        <authorList>
            <person name="Marin M."/>
            <person name="Tailor C.S."/>
            <person name="Nouri A."/>
            <person name="Kozak S.L."/>
            <person name="Kabat D."/>
        </authorList>
    </citation>
    <scope>NUCLEOTIDE SEQUENCE [MRNA]</scope>
    <source>
        <tissue>Ovary</tissue>
    </source>
</reference>
<reference key="2">
    <citation type="journal article" date="2005" name="Retrovirology">
        <title>Use of different but overlapping determinants in a retrovirus receptor accounts for non-reciprocal interference between xenotropic and polytropic murine leukemia viruses.</title>
        <authorList>
            <person name="Van Hoeven N.S."/>
            <person name="Miller A.D."/>
        </authorList>
    </citation>
    <scope>NUCLEOTIDE SEQUENCE [MRNA]</scope>
    <source>
        <tissue>Ovary</tissue>
    </source>
</reference>
<evidence type="ECO:0000250" key="1">
    <source>
        <dbReference type="UniProtKB" id="Q9UBH6"/>
    </source>
</evidence>
<evidence type="ECO:0000255" key="2">
    <source>
        <dbReference type="PROSITE-ProRule" id="PRU00712"/>
    </source>
</evidence>
<evidence type="ECO:0000256" key="3">
    <source>
        <dbReference type="SAM" id="MobiDB-lite"/>
    </source>
</evidence>
<evidence type="ECO:0000305" key="4"/>
<accession>Q9QZ70</accession>
<accession>Q9R033</accession>
<feature type="chain" id="PRO_0000315852" description="Solute carrier family 53 member 1">
    <location>
        <begin position="1"/>
        <end position="696"/>
    </location>
</feature>
<feature type="topological domain" description="Cytoplasmic" evidence="1">
    <location>
        <begin position="1"/>
        <end position="228"/>
    </location>
</feature>
<feature type="transmembrane region" description="Helical; Name=1" evidence="1">
    <location>
        <begin position="229"/>
        <end position="259"/>
    </location>
</feature>
<feature type="topological domain" description="Extracellular" evidence="1">
    <location>
        <begin position="260"/>
        <end position="264"/>
    </location>
</feature>
<feature type="transmembrane region" description="Helical; Name=2" evidence="1">
    <location>
        <begin position="265"/>
        <end position="296"/>
    </location>
</feature>
<feature type="topological domain" description="Cytoplasmic" evidence="1">
    <location>
        <begin position="297"/>
        <end position="309"/>
    </location>
</feature>
<feature type="transmembrane region" description="Helical; Name=3" evidence="1">
    <location>
        <begin position="310"/>
        <end position="337"/>
    </location>
</feature>
<feature type="topological domain" description="Extracellular" evidence="1">
    <location>
        <begin position="338"/>
        <end position="343"/>
    </location>
</feature>
<feature type="transmembrane region" description="Helical; Name=4" evidence="1">
    <location>
        <begin position="344"/>
        <end position="365"/>
    </location>
</feature>
<feature type="intramembrane region" description="Helical" evidence="1">
    <location>
        <begin position="366"/>
        <end position="383"/>
    </location>
</feature>
<feature type="topological domain" description="Cytoplasmic" evidence="1">
    <location>
        <begin position="384"/>
        <end position="388"/>
    </location>
</feature>
<feature type="transmembrane region" description="Discontinuously helical; Name=5" evidence="1">
    <location>
        <begin position="389"/>
        <end position="422"/>
    </location>
</feature>
<feature type="topological domain" description="Extracellular" evidence="1">
    <location>
        <begin position="423"/>
        <end position="429"/>
    </location>
</feature>
<feature type="transmembrane region" description="Discontinuously helical; Name=6" evidence="1">
    <location>
        <begin position="430"/>
        <end position="471"/>
    </location>
</feature>
<feature type="topological domain" description="Cytoplasmic" evidence="1">
    <location>
        <position position="472"/>
    </location>
</feature>
<feature type="transmembrane region" description="Helical; Name=7" evidence="1">
    <location>
        <begin position="473"/>
        <end position="503"/>
    </location>
</feature>
<feature type="topological domain" description="Extracellular" evidence="1">
    <location>
        <begin position="504"/>
        <end position="506"/>
    </location>
</feature>
<feature type="transmembrane region" description="Helical; Name=8" evidence="1">
    <location>
        <begin position="507"/>
        <end position="534"/>
    </location>
</feature>
<feature type="topological domain" description="Cytoplasmic" evidence="1">
    <location>
        <begin position="535"/>
        <end position="553"/>
    </location>
</feature>
<feature type="transmembrane region" description="Discontinuously helical; Name=9" evidence="1">
    <location>
        <begin position="554"/>
        <end position="585"/>
    </location>
</feature>
<feature type="topological domain" description="Extracellular" evidence="1">
    <location>
        <begin position="586"/>
        <end position="587"/>
    </location>
</feature>
<feature type="transmembrane region" description="Helical; Name=10" evidence="1">
    <location>
        <begin position="588"/>
        <end position="626"/>
    </location>
</feature>
<feature type="topological domain" description="Cytoplasmic" evidence="1">
    <location>
        <begin position="627"/>
        <end position="696"/>
    </location>
</feature>
<feature type="domain" description="SPX" evidence="1">
    <location>
        <begin position="2"/>
        <end position="224"/>
    </location>
</feature>
<feature type="domain" description="EXS" evidence="2">
    <location>
        <begin position="439"/>
        <end position="643"/>
    </location>
</feature>
<feature type="region of interest" description="Important for inositol polyphosphate binding" evidence="1">
    <location>
        <begin position="158"/>
        <end position="165"/>
    </location>
</feature>
<feature type="region of interest" description="Disordered" evidence="3">
    <location>
        <begin position="672"/>
        <end position="696"/>
    </location>
</feature>
<feature type="binding site" evidence="1">
    <location>
        <position position="398"/>
    </location>
    <ligand>
        <name>phosphate</name>
        <dbReference type="ChEBI" id="CHEBI:43474"/>
    </ligand>
</feature>
<feature type="binding site" evidence="1">
    <location>
        <position position="401"/>
    </location>
    <ligand>
        <name>phosphate</name>
        <dbReference type="ChEBI" id="CHEBI:43474"/>
    </ligand>
</feature>
<feature type="binding site" evidence="1">
    <location>
        <position position="482"/>
    </location>
    <ligand>
        <name>phosphate</name>
        <dbReference type="ChEBI" id="CHEBI:43474"/>
    </ligand>
</feature>
<feature type="binding site" evidence="1">
    <location>
        <position position="483"/>
    </location>
    <ligand>
        <name>phosphate</name>
        <dbReference type="ChEBI" id="CHEBI:43474"/>
    </ligand>
</feature>
<feature type="binding site" evidence="1">
    <location>
        <position position="570"/>
    </location>
    <ligand>
        <name>phosphate</name>
        <dbReference type="ChEBI" id="CHEBI:43474"/>
    </ligand>
</feature>
<feature type="binding site" evidence="1">
    <location>
        <position position="603"/>
    </location>
    <ligand>
        <name>phosphate</name>
        <dbReference type="ChEBI" id="CHEBI:43474"/>
    </ligand>
</feature>
<feature type="binding site" evidence="1">
    <location>
        <position position="604"/>
    </location>
    <ligand>
        <name>phosphate</name>
        <dbReference type="ChEBI" id="CHEBI:43474"/>
    </ligand>
</feature>
<feature type="site" description="Gating residue for phosphate transport" evidence="1">
    <location>
        <position position="573"/>
    </location>
</feature>
<feature type="modified residue" description="Phosphoserine" evidence="1">
    <location>
        <position position="668"/>
    </location>
</feature>
<feature type="modified residue" description="Phosphothreonine" evidence="1">
    <location>
        <position position="690"/>
    </location>
</feature>
<feature type="sequence conflict" description="In Ref. 1; AAF03485." evidence="4" ref="1">
    <original>E</original>
    <variation>K</variation>
    <location>
        <position position="40"/>
    </location>
</feature>
<feature type="sequence conflict" description="In Ref. 1; AAF03485." evidence="4" ref="1">
    <original>F</original>
    <variation>L</variation>
    <location>
        <position position="240"/>
    </location>
</feature>